<evidence type="ECO:0000255" key="1">
    <source>
        <dbReference type="HAMAP-Rule" id="MF_01179"/>
    </source>
</evidence>
<reference key="1">
    <citation type="journal article" date="2010" name="PLoS ONE">
        <title>Genome sequence of Cronobacter sakazakii BAA-894 and comparative genomic hybridization analysis with other Cronobacter species.</title>
        <authorList>
            <person name="Kucerova E."/>
            <person name="Clifton S.W."/>
            <person name="Xia X.Q."/>
            <person name="Long F."/>
            <person name="Porwollik S."/>
            <person name="Fulton L."/>
            <person name="Fronick C."/>
            <person name="Minx P."/>
            <person name="Kyung K."/>
            <person name="Warren W."/>
            <person name="Fulton R."/>
            <person name="Feng D."/>
            <person name="Wollam A."/>
            <person name="Shah N."/>
            <person name="Bhonagiri V."/>
            <person name="Nash W.E."/>
            <person name="Hallsworth-Pepin K."/>
            <person name="Wilson R.K."/>
            <person name="McClelland M."/>
            <person name="Forsythe S.J."/>
        </authorList>
    </citation>
    <scope>NUCLEOTIDE SEQUENCE [LARGE SCALE GENOMIC DNA]</scope>
    <source>
        <strain>ATCC BAA-894</strain>
    </source>
</reference>
<organism>
    <name type="scientific">Cronobacter sakazakii (strain ATCC BAA-894)</name>
    <name type="common">Enterobacter sakazakii</name>
    <dbReference type="NCBI Taxonomy" id="290339"/>
    <lineage>
        <taxon>Bacteria</taxon>
        <taxon>Pseudomonadati</taxon>
        <taxon>Pseudomonadota</taxon>
        <taxon>Gammaproteobacteria</taxon>
        <taxon>Enterobacterales</taxon>
        <taxon>Enterobacteriaceae</taxon>
        <taxon>Cronobacter</taxon>
    </lineage>
</organism>
<feature type="chain" id="PRO_0000343955" description="Cell division inhibitor SulA">
    <location>
        <begin position="1"/>
        <end position="168"/>
    </location>
</feature>
<feature type="region of interest" description="FtsZ binding" evidence="1">
    <location>
        <begin position="105"/>
        <end position="111"/>
    </location>
</feature>
<feature type="region of interest" description="Lon protease binding" evidence="1">
    <location>
        <begin position="161"/>
        <end position="168"/>
    </location>
</feature>
<feature type="site" description="Essential for degradation by Lon protease" evidence="1">
    <location>
        <position position="168"/>
    </location>
</feature>
<dbReference type="EMBL" id="CP000783">
    <property type="protein sequence ID" value="ABU77636.1"/>
    <property type="molecule type" value="Genomic_DNA"/>
</dbReference>
<dbReference type="RefSeq" id="WP_004385420.1">
    <property type="nucleotide sequence ID" value="NC_009778.1"/>
</dbReference>
<dbReference type="SMR" id="A7MFW4"/>
<dbReference type="GeneID" id="56731160"/>
<dbReference type="KEGG" id="esa:ESA_02390"/>
<dbReference type="HOGENOM" id="CLU_118972_1_0_6"/>
<dbReference type="Proteomes" id="UP000000260">
    <property type="component" value="Chromosome"/>
</dbReference>
<dbReference type="GO" id="GO:0000917">
    <property type="term" value="P:division septum assembly"/>
    <property type="evidence" value="ECO:0007669"/>
    <property type="project" value="UniProtKB-KW"/>
</dbReference>
<dbReference type="GO" id="GO:0006281">
    <property type="term" value="P:DNA repair"/>
    <property type="evidence" value="ECO:0007669"/>
    <property type="project" value="TreeGrafter"/>
</dbReference>
<dbReference type="GO" id="GO:0051782">
    <property type="term" value="P:negative regulation of cell division"/>
    <property type="evidence" value="ECO:0007669"/>
    <property type="project" value="UniProtKB-UniRule"/>
</dbReference>
<dbReference type="GO" id="GO:0009432">
    <property type="term" value="P:SOS response"/>
    <property type="evidence" value="ECO:0007669"/>
    <property type="project" value="UniProtKB-UniRule"/>
</dbReference>
<dbReference type="FunFam" id="3.40.50.300:FF:000417">
    <property type="entry name" value="Cell division inhibitor SulA"/>
    <property type="match status" value="1"/>
</dbReference>
<dbReference type="Gene3D" id="3.40.50.300">
    <property type="entry name" value="P-loop containing nucleotide triphosphate hydrolases"/>
    <property type="match status" value="1"/>
</dbReference>
<dbReference type="HAMAP" id="MF_01179">
    <property type="entry name" value="SulA"/>
    <property type="match status" value="1"/>
</dbReference>
<dbReference type="InterPro" id="IPR004596">
    <property type="entry name" value="Cell_div_suppressor_SulA"/>
</dbReference>
<dbReference type="InterPro" id="IPR027417">
    <property type="entry name" value="P-loop_NTPase"/>
</dbReference>
<dbReference type="InterPro" id="IPR050356">
    <property type="entry name" value="SulA_CellDiv_inhibitor"/>
</dbReference>
<dbReference type="InterPro" id="IPR047696">
    <property type="entry name" value="SulA_enterobact"/>
</dbReference>
<dbReference type="NCBIfam" id="NF007892">
    <property type="entry name" value="PRK10595.1"/>
    <property type="match status" value="1"/>
</dbReference>
<dbReference type="NCBIfam" id="TIGR00623">
    <property type="entry name" value="SOS_SulA_coli"/>
    <property type="match status" value="1"/>
</dbReference>
<dbReference type="PANTHER" id="PTHR35369">
    <property type="entry name" value="BLR3025 PROTEIN-RELATED"/>
    <property type="match status" value="1"/>
</dbReference>
<dbReference type="PANTHER" id="PTHR35369:SF4">
    <property type="entry name" value="CELL DIVISION INHIBITOR SULA"/>
    <property type="match status" value="1"/>
</dbReference>
<dbReference type="Pfam" id="PF03846">
    <property type="entry name" value="SulA"/>
    <property type="match status" value="1"/>
</dbReference>
<dbReference type="PIRSF" id="PIRSF003093">
    <property type="entry name" value="SulA"/>
    <property type="match status" value="1"/>
</dbReference>
<dbReference type="SUPFAM" id="SSF52540">
    <property type="entry name" value="P-loop containing nucleoside triphosphate hydrolases"/>
    <property type="match status" value="1"/>
</dbReference>
<protein>
    <recommendedName>
        <fullName evidence="1">Cell division inhibitor SulA</fullName>
    </recommendedName>
</protein>
<sequence>MYSSHQNRAYGSRRLAKETAGALAQAETRGLISEVMYNEDQPWMTQLVLLPLLQQLGQQSRWQLWLTPQQRLSREWVESAGLPLTKVMQVSQMNPQVTLDSMIRALETGNYSVVIAWLHDDLTDDEHRRLTAAAEKGNAMGFLMRPVQPSLPGDRPRSALRIHSGMVH</sequence>
<name>SULA_CROS8</name>
<accession>A7MFW4</accession>
<proteinExistence type="inferred from homology"/>
<comment type="function">
    <text evidence="1">Component of the SOS system and an inhibitor of cell division. Accumulation of SulA causes rapid cessation of cell division and the appearance of long, non-septate filaments. In the presence of GTP, binds a polymerization-competent form of FtsZ in a 1:1 ratio, thus inhibiting FtsZ polymerization and therefore preventing it from participating in the assembly of the Z ring. This mechanism prevents the premature segregation of damaged DNA to daughter cells during cell division.</text>
</comment>
<comment type="subunit">
    <text evidence="1">Interacts with FtsZ.</text>
</comment>
<comment type="induction">
    <text evidence="1">By DNA damage, as part of the SOS response.</text>
</comment>
<comment type="PTM">
    <text evidence="1">Is rapidly cleaved and degraded by the Lon protease once DNA damage is repaired.</text>
</comment>
<comment type="similarity">
    <text evidence="1">Belongs to the SulA family.</text>
</comment>
<gene>
    <name evidence="1" type="primary">sulA</name>
    <name type="ordered locus">ESA_02390</name>
</gene>
<keyword id="KW-0131">Cell cycle</keyword>
<keyword id="KW-0132">Cell division</keyword>
<keyword id="KW-0227">DNA damage</keyword>
<keyword id="KW-1185">Reference proteome</keyword>
<keyword id="KW-0717">Septation</keyword>
<keyword id="KW-0742">SOS response</keyword>